<evidence type="ECO:0000255" key="1">
    <source>
        <dbReference type="HAMAP-Rule" id="MF_00069"/>
    </source>
</evidence>
<comment type="function">
    <text evidence="1">Catalyzes the reduction of hydroxylamine to form NH(3) and H(2)O.</text>
</comment>
<comment type="catalytic activity">
    <reaction evidence="1">
        <text>A + NH4(+) + H2O = hydroxylamine + AH2 + H(+)</text>
        <dbReference type="Rhea" id="RHEA:22052"/>
        <dbReference type="ChEBI" id="CHEBI:13193"/>
        <dbReference type="ChEBI" id="CHEBI:15377"/>
        <dbReference type="ChEBI" id="CHEBI:15378"/>
        <dbReference type="ChEBI" id="CHEBI:15429"/>
        <dbReference type="ChEBI" id="CHEBI:17499"/>
        <dbReference type="ChEBI" id="CHEBI:28938"/>
        <dbReference type="EC" id="1.7.99.1"/>
    </reaction>
</comment>
<comment type="cofactor">
    <cofactor evidence="1">
        <name>[4Fe-4S] cluster</name>
        <dbReference type="ChEBI" id="CHEBI:49883"/>
    </cofactor>
    <text evidence="1">Binds 1 [4Fe-4S] cluster.</text>
</comment>
<comment type="cofactor">
    <cofactor evidence="1">
        <name>hybrid [4Fe-2O-2S] cluster</name>
        <dbReference type="ChEBI" id="CHEBI:60519"/>
    </cofactor>
    <text evidence="1">Binds 1 hybrid [4Fe-2O-2S] cluster.</text>
</comment>
<comment type="subcellular location">
    <subcellularLocation>
        <location evidence="1">Cytoplasm</location>
    </subcellularLocation>
</comment>
<comment type="similarity">
    <text evidence="1">Belongs to the HCP family.</text>
</comment>
<proteinExistence type="inferred from homology"/>
<name>HCP_ACIFI</name>
<keyword id="KW-0004">4Fe-4S</keyword>
<keyword id="KW-0963">Cytoplasm</keyword>
<keyword id="KW-0408">Iron</keyword>
<keyword id="KW-0411">Iron-sulfur</keyword>
<keyword id="KW-0479">Metal-binding</keyword>
<keyword id="KW-0560">Oxidoreductase</keyword>
<keyword id="KW-0614">Plasmid</keyword>
<organism>
    <name type="scientific">Acidithiobacillus ferridurans</name>
    <dbReference type="NCBI Taxonomy" id="1232575"/>
    <lineage>
        <taxon>Bacteria</taxon>
        <taxon>Pseudomonadati</taxon>
        <taxon>Pseudomonadota</taxon>
        <taxon>Acidithiobacillia</taxon>
        <taxon>Acidithiobacillales</taxon>
        <taxon>Acidithiobacillaceae</taxon>
        <taxon>Acidithiobacillus</taxon>
    </lineage>
</organism>
<feature type="chain" id="PRO_0000151686" description="Hydroxylamine reductase">
    <location>
        <begin position="1"/>
        <end position="556"/>
    </location>
</feature>
<feature type="binding site" evidence="1">
    <location>
        <position position="4"/>
    </location>
    <ligand>
        <name>[4Fe-4S] cluster</name>
        <dbReference type="ChEBI" id="CHEBI:49883"/>
    </ligand>
</feature>
<feature type="binding site" evidence="1">
    <location>
        <position position="7"/>
    </location>
    <ligand>
        <name>[4Fe-4S] cluster</name>
        <dbReference type="ChEBI" id="CHEBI:49883"/>
    </ligand>
</feature>
<feature type="binding site" evidence="1">
    <location>
        <position position="19"/>
    </location>
    <ligand>
        <name>[4Fe-4S] cluster</name>
        <dbReference type="ChEBI" id="CHEBI:49883"/>
    </ligand>
</feature>
<feature type="binding site" evidence="1">
    <location>
        <position position="26"/>
    </location>
    <ligand>
        <name>[4Fe-4S] cluster</name>
        <dbReference type="ChEBI" id="CHEBI:49883"/>
    </ligand>
</feature>
<feature type="binding site" evidence="1">
    <location>
        <position position="252"/>
    </location>
    <ligand>
        <name>hybrid [4Fe-2O-2S] cluster</name>
        <dbReference type="ChEBI" id="CHEBI:60519"/>
    </ligand>
</feature>
<feature type="binding site" evidence="1">
    <location>
        <position position="276"/>
    </location>
    <ligand>
        <name>hybrid [4Fe-2O-2S] cluster</name>
        <dbReference type="ChEBI" id="CHEBI:60519"/>
    </ligand>
</feature>
<feature type="binding site" evidence="1">
    <location>
        <position position="320"/>
    </location>
    <ligand>
        <name>hybrid [4Fe-2O-2S] cluster</name>
        <dbReference type="ChEBI" id="CHEBI:60519"/>
    </ligand>
</feature>
<feature type="binding site" description="via persulfide group" evidence="1">
    <location>
        <position position="407"/>
    </location>
    <ligand>
        <name>hybrid [4Fe-2O-2S] cluster</name>
        <dbReference type="ChEBI" id="CHEBI:60519"/>
    </ligand>
</feature>
<feature type="binding site" evidence="1">
    <location>
        <position position="435"/>
    </location>
    <ligand>
        <name>hybrid [4Fe-2O-2S] cluster</name>
        <dbReference type="ChEBI" id="CHEBI:60519"/>
    </ligand>
</feature>
<feature type="binding site" evidence="1">
    <location>
        <position position="460"/>
    </location>
    <ligand>
        <name>hybrid [4Fe-2O-2S] cluster</name>
        <dbReference type="ChEBI" id="CHEBI:60519"/>
    </ligand>
</feature>
<feature type="binding site" evidence="1">
    <location>
        <position position="494"/>
    </location>
    <ligand>
        <name>hybrid [4Fe-2O-2S] cluster</name>
        <dbReference type="ChEBI" id="CHEBI:60519"/>
    </ligand>
</feature>
<feature type="binding site" evidence="1">
    <location>
        <position position="496"/>
    </location>
    <ligand>
        <name>hybrid [4Fe-2O-2S] cluster</name>
        <dbReference type="ChEBI" id="CHEBI:60519"/>
    </ligand>
</feature>
<feature type="modified residue" description="Cysteine persulfide" evidence="1">
    <location>
        <position position="407"/>
    </location>
</feature>
<dbReference type="EC" id="1.7.99.1" evidence="1"/>
<dbReference type="EMBL" id="U73041">
    <property type="protein sequence ID" value="AAC80175.1"/>
    <property type="molecule type" value="Genomic_DNA"/>
</dbReference>
<dbReference type="RefSeq" id="NP_863591.1">
    <property type="nucleotide sequence ID" value="NC_005023.1"/>
</dbReference>
<dbReference type="SMR" id="P96095"/>
<dbReference type="GO" id="GO:0005737">
    <property type="term" value="C:cytoplasm"/>
    <property type="evidence" value="ECO:0007669"/>
    <property type="project" value="UniProtKB-SubCell"/>
</dbReference>
<dbReference type="GO" id="GO:0051539">
    <property type="term" value="F:4 iron, 4 sulfur cluster binding"/>
    <property type="evidence" value="ECO:0007669"/>
    <property type="project" value="UniProtKB-KW"/>
</dbReference>
<dbReference type="GO" id="GO:0050418">
    <property type="term" value="F:hydroxylamine reductase activity"/>
    <property type="evidence" value="ECO:0007669"/>
    <property type="project" value="UniProtKB-UniRule"/>
</dbReference>
<dbReference type="GO" id="GO:0046872">
    <property type="term" value="F:metal ion binding"/>
    <property type="evidence" value="ECO:0007669"/>
    <property type="project" value="UniProtKB-KW"/>
</dbReference>
<dbReference type="GO" id="GO:0004601">
    <property type="term" value="F:peroxidase activity"/>
    <property type="evidence" value="ECO:0007669"/>
    <property type="project" value="TreeGrafter"/>
</dbReference>
<dbReference type="GO" id="GO:0042542">
    <property type="term" value="P:response to hydrogen peroxide"/>
    <property type="evidence" value="ECO:0007669"/>
    <property type="project" value="TreeGrafter"/>
</dbReference>
<dbReference type="CDD" id="cd01914">
    <property type="entry name" value="HCP"/>
    <property type="match status" value="1"/>
</dbReference>
<dbReference type="FunFam" id="3.40.50.2030:FF:000002">
    <property type="entry name" value="Hydroxylamine reductase"/>
    <property type="match status" value="1"/>
</dbReference>
<dbReference type="Gene3D" id="1.20.1270.20">
    <property type="match status" value="2"/>
</dbReference>
<dbReference type="Gene3D" id="3.40.50.2030">
    <property type="match status" value="2"/>
</dbReference>
<dbReference type="HAMAP" id="MF_00069">
    <property type="entry name" value="Hydroxylam_reduct"/>
    <property type="match status" value="1"/>
</dbReference>
<dbReference type="InterPro" id="IPR004137">
    <property type="entry name" value="HCP/CODH"/>
</dbReference>
<dbReference type="InterPro" id="IPR010048">
    <property type="entry name" value="Hydroxylam_reduct"/>
</dbReference>
<dbReference type="InterPro" id="IPR016099">
    <property type="entry name" value="Prismane-like_a/b-sand"/>
</dbReference>
<dbReference type="InterPro" id="IPR011254">
    <property type="entry name" value="Prismane-like_sf"/>
</dbReference>
<dbReference type="InterPro" id="IPR016100">
    <property type="entry name" value="Prismane_a-bundle"/>
</dbReference>
<dbReference type="NCBIfam" id="TIGR01703">
    <property type="entry name" value="hybrid_clust"/>
    <property type="match status" value="1"/>
</dbReference>
<dbReference type="NCBIfam" id="NF003658">
    <property type="entry name" value="PRK05290.1"/>
    <property type="match status" value="1"/>
</dbReference>
<dbReference type="PANTHER" id="PTHR30109">
    <property type="entry name" value="HYDROXYLAMINE REDUCTASE"/>
    <property type="match status" value="1"/>
</dbReference>
<dbReference type="PANTHER" id="PTHR30109:SF0">
    <property type="entry name" value="HYDROXYLAMINE REDUCTASE"/>
    <property type="match status" value="1"/>
</dbReference>
<dbReference type="Pfam" id="PF03063">
    <property type="entry name" value="Prismane"/>
    <property type="match status" value="1"/>
</dbReference>
<dbReference type="PIRSF" id="PIRSF000076">
    <property type="entry name" value="HCP"/>
    <property type="match status" value="1"/>
</dbReference>
<dbReference type="SUPFAM" id="SSF56821">
    <property type="entry name" value="Prismane protein-like"/>
    <property type="match status" value="1"/>
</dbReference>
<sequence>MMFCYQCEQTTRSPAGIGCTSEPGTCGKDEATAVLQDILTHLMKGIASMRAGRAMGVADRRTDDFIFYGLFTTLTNVNFTATRFVHLIQEASKRRERIKLLYEEAAREQGKTPEILSGPALFQPADSLEQLLRQAPSVAINADVEHLGSDVIGARALILYGMKGVALIAQHARVLGYQSDEVMPQAEEILDYLASNPTDLDEMLEESLEVGRLNLKVMELLDVANTDSFGAQEITSVRISPIQGKAILVSGHDLHDLKQILEQTKDQGINVYTHGEMLPANAYPLLKAYPHLAGNLGGAWQDQQREFADFPGPIVMTSNCIIEPGRSYKNRIFTLGPVGWPGVRHIDNGDFTPVIQAAKALPGFTADAKEQRITIGFGHHTLLGVADKIVDAVKHGDIRHFFLVGGCDGVSPARNYFTEVADNAPADSVVMTLGCGKYRFNKHEFGDIGGIPRLLDIGQCNDAHSAIRVAGALAEAFNCGVNDLPLSIMLSWFEQKATAIHLSLLALGIKGIKLGPTLPAYLTPTLVQKLQSRFDLDLDLIGEAQADLQAALAHTA</sequence>
<accession>P96095</accession>
<reference key="1">
    <citation type="journal article" date="1997" name="Microbiology">
        <title>A geographically widespread plasmid from Thiobacillus ferrooxidans has genes for ferredoxin-, FNR-, prismane- and NADH-oxidoreductase-like proteins which are also located on the chromosome.</title>
        <authorList>
            <person name="Dominy C.N."/>
            <person name="Deane S.M."/>
            <person name="Rawlings D.E."/>
        </authorList>
    </citation>
    <scope>NUCLEOTIDE SEQUENCE [GENOMIC DNA]</scope>
    <source>
        <strain>ATCC 33020 / DSM 29468 / JCM 18981 / 11Fe</strain>
    </source>
</reference>
<gene>
    <name evidence="1" type="primary">hcp</name>
</gene>
<geneLocation type="plasmid">
    <name>pTF5</name>
</geneLocation>
<protein>
    <recommendedName>
        <fullName evidence="1">Hydroxylamine reductase</fullName>
        <ecNumber evidence="1">1.7.99.1</ecNumber>
    </recommendedName>
    <alternativeName>
        <fullName evidence="1">Hybrid-cluster protein</fullName>
        <shortName evidence="1">HCP</shortName>
    </alternativeName>
    <alternativeName>
        <fullName evidence="1">Prismane protein</fullName>
    </alternativeName>
</protein>